<evidence type="ECO:0000250" key="1">
    <source>
        <dbReference type="UniProtKB" id="Q9JHK4"/>
    </source>
</evidence>
<evidence type="ECO:0000269" key="2">
    <source>
    </source>
</evidence>
<evidence type="ECO:0000269" key="3">
    <source>
    </source>
</evidence>
<evidence type="ECO:0000269" key="4">
    <source>
    </source>
</evidence>
<evidence type="ECO:0000269" key="5">
    <source>
    </source>
</evidence>
<evidence type="ECO:0000305" key="6"/>
<gene>
    <name type="primary">RABGGTA</name>
</gene>
<reference key="1">
    <citation type="journal article" date="1996" name="Genomics">
        <title>cDNA cloning and chromosomal localization of the genes encoding the alpha- and beta-subunits of human Rab geranylgeranyl transferase: the 3' end of the alpha-subunit gene overlaps with the transglutaminase 1 gene promoter.</title>
        <authorList>
            <person name="van Bokhoven H."/>
            <person name="Rawson R.B."/>
            <person name="Merkx G.F.M."/>
            <person name="Cremers F.P.M."/>
            <person name="Seabra M.C."/>
        </authorList>
    </citation>
    <scope>NUCLEOTIDE SEQUENCE [MRNA]</scope>
    <source>
        <tissue>Fetal brain</tissue>
    </source>
</reference>
<reference key="2">
    <citation type="submission" date="1998-03" db="EMBL/GenBank/DDBJ databases">
        <authorList>
            <person name="van Bokhoven H."/>
        </authorList>
    </citation>
    <scope>SEQUENCE REVISION</scope>
</reference>
<reference key="3">
    <citation type="journal article" date="1997" name="Biochem. Biophys. Res. Commun.">
        <title>The genes encoding geranylgeranyl transferase alpha-subunit and transglutaminase 1 are very closely linked but not functionally related in terminally differentiating keratinocytes.</title>
        <authorList>
            <person name="Song H.-J."/>
            <person name="Rossi A."/>
            <person name="Ceci R."/>
            <person name="Kim I.-G."/>
            <person name="Anzano M.A."/>
            <person name="Jang S.-I."/>
            <person name="De Laurenzi V."/>
            <person name="Steinert P.M."/>
        </authorList>
    </citation>
    <scope>NUCLEOTIDE SEQUENCE [MRNA]</scope>
</reference>
<reference key="4">
    <citation type="journal article" date="2004" name="Nat. Genet.">
        <title>Complete sequencing and characterization of 21,243 full-length human cDNAs.</title>
        <authorList>
            <person name="Ota T."/>
            <person name="Suzuki Y."/>
            <person name="Nishikawa T."/>
            <person name="Otsuki T."/>
            <person name="Sugiyama T."/>
            <person name="Irie R."/>
            <person name="Wakamatsu A."/>
            <person name="Hayashi K."/>
            <person name="Sato H."/>
            <person name="Nagai K."/>
            <person name="Kimura K."/>
            <person name="Makita H."/>
            <person name="Sekine M."/>
            <person name="Obayashi M."/>
            <person name="Nishi T."/>
            <person name="Shibahara T."/>
            <person name="Tanaka T."/>
            <person name="Ishii S."/>
            <person name="Yamamoto J."/>
            <person name="Saito K."/>
            <person name="Kawai Y."/>
            <person name="Isono Y."/>
            <person name="Nakamura Y."/>
            <person name="Nagahari K."/>
            <person name="Murakami K."/>
            <person name="Yasuda T."/>
            <person name="Iwayanagi T."/>
            <person name="Wagatsuma M."/>
            <person name="Shiratori A."/>
            <person name="Sudo H."/>
            <person name="Hosoiri T."/>
            <person name="Kaku Y."/>
            <person name="Kodaira H."/>
            <person name="Kondo H."/>
            <person name="Sugawara M."/>
            <person name="Takahashi M."/>
            <person name="Kanda K."/>
            <person name="Yokoi T."/>
            <person name="Furuya T."/>
            <person name="Kikkawa E."/>
            <person name="Omura Y."/>
            <person name="Abe K."/>
            <person name="Kamihara K."/>
            <person name="Katsuta N."/>
            <person name="Sato K."/>
            <person name="Tanikawa M."/>
            <person name="Yamazaki M."/>
            <person name="Ninomiya K."/>
            <person name="Ishibashi T."/>
            <person name="Yamashita H."/>
            <person name="Murakawa K."/>
            <person name="Fujimori K."/>
            <person name="Tanai H."/>
            <person name="Kimata M."/>
            <person name="Watanabe M."/>
            <person name="Hiraoka S."/>
            <person name="Chiba Y."/>
            <person name="Ishida S."/>
            <person name="Ono Y."/>
            <person name="Takiguchi S."/>
            <person name="Watanabe S."/>
            <person name="Yosida M."/>
            <person name="Hotuta T."/>
            <person name="Kusano J."/>
            <person name="Kanehori K."/>
            <person name="Takahashi-Fujii A."/>
            <person name="Hara H."/>
            <person name="Tanase T.-O."/>
            <person name="Nomura Y."/>
            <person name="Togiya S."/>
            <person name="Komai F."/>
            <person name="Hara R."/>
            <person name="Takeuchi K."/>
            <person name="Arita M."/>
            <person name="Imose N."/>
            <person name="Musashino K."/>
            <person name="Yuuki H."/>
            <person name="Oshima A."/>
            <person name="Sasaki N."/>
            <person name="Aotsuka S."/>
            <person name="Yoshikawa Y."/>
            <person name="Matsunawa H."/>
            <person name="Ichihara T."/>
            <person name="Shiohata N."/>
            <person name="Sano S."/>
            <person name="Moriya S."/>
            <person name="Momiyama H."/>
            <person name="Satoh N."/>
            <person name="Takami S."/>
            <person name="Terashima Y."/>
            <person name="Suzuki O."/>
            <person name="Nakagawa S."/>
            <person name="Senoh A."/>
            <person name="Mizoguchi H."/>
            <person name="Goto Y."/>
            <person name="Shimizu F."/>
            <person name="Wakebe H."/>
            <person name="Hishigaki H."/>
            <person name="Watanabe T."/>
            <person name="Sugiyama A."/>
            <person name="Takemoto M."/>
            <person name="Kawakami B."/>
            <person name="Yamazaki M."/>
            <person name="Watanabe K."/>
            <person name="Kumagai A."/>
            <person name="Itakura S."/>
            <person name="Fukuzumi Y."/>
            <person name="Fujimori Y."/>
            <person name="Komiyama M."/>
            <person name="Tashiro H."/>
            <person name="Tanigami A."/>
            <person name="Fujiwara T."/>
            <person name="Ono T."/>
            <person name="Yamada K."/>
            <person name="Fujii Y."/>
            <person name="Ozaki K."/>
            <person name="Hirao M."/>
            <person name="Ohmori Y."/>
            <person name="Kawabata A."/>
            <person name="Hikiji T."/>
            <person name="Kobatake N."/>
            <person name="Inagaki H."/>
            <person name="Ikema Y."/>
            <person name="Okamoto S."/>
            <person name="Okitani R."/>
            <person name="Kawakami T."/>
            <person name="Noguchi S."/>
            <person name="Itoh T."/>
            <person name="Shigeta K."/>
            <person name="Senba T."/>
            <person name="Matsumura K."/>
            <person name="Nakajima Y."/>
            <person name="Mizuno T."/>
            <person name="Morinaga M."/>
            <person name="Sasaki M."/>
            <person name="Togashi T."/>
            <person name="Oyama M."/>
            <person name="Hata H."/>
            <person name="Watanabe M."/>
            <person name="Komatsu T."/>
            <person name="Mizushima-Sugano J."/>
            <person name="Satoh T."/>
            <person name="Shirai Y."/>
            <person name="Takahashi Y."/>
            <person name="Nakagawa K."/>
            <person name="Okumura K."/>
            <person name="Nagase T."/>
            <person name="Nomura N."/>
            <person name="Kikuchi H."/>
            <person name="Masuho Y."/>
            <person name="Yamashita R."/>
            <person name="Nakai K."/>
            <person name="Yada T."/>
            <person name="Nakamura Y."/>
            <person name="Ohara O."/>
            <person name="Isogai T."/>
            <person name="Sugano S."/>
        </authorList>
    </citation>
    <scope>NUCLEOTIDE SEQUENCE [LARGE SCALE MRNA]</scope>
    <scope>VARIANT ALA-420</scope>
    <source>
        <tissue>Thymus</tissue>
        <tissue>Tongue</tissue>
    </source>
</reference>
<reference key="5">
    <citation type="submission" date="2005-09" db="EMBL/GenBank/DDBJ databases">
        <authorList>
            <person name="Mural R.J."/>
            <person name="Istrail S."/>
            <person name="Sutton G.G."/>
            <person name="Florea L."/>
            <person name="Halpern A.L."/>
            <person name="Mobarry C.M."/>
            <person name="Lippert R."/>
            <person name="Walenz B."/>
            <person name="Shatkay H."/>
            <person name="Dew I."/>
            <person name="Miller J.R."/>
            <person name="Flanigan M.J."/>
            <person name="Edwards N.J."/>
            <person name="Bolanos R."/>
            <person name="Fasulo D."/>
            <person name="Halldorsson B.V."/>
            <person name="Hannenhalli S."/>
            <person name="Turner R."/>
            <person name="Yooseph S."/>
            <person name="Lu F."/>
            <person name="Nusskern D.R."/>
            <person name="Shue B.C."/>
            <person name="Zheng X.H."/>
            <person name="Zhong F."/>
            <person name="Delcher A.L."/>
            <person name="Huson D.H."/>
            <person name="Kravitz S.A."/>
            <person name="Mouchard L."/>
            <person name="Reinert K."/>
            <person name="Remington K.A."/>
            <person name="Clark A.G."/>
            <person name="Waterman M.S."/>
            <person name="Eichler E.E."/>
            <person name="Adams M.D."/>
            <person name="Hunkapiller M.W."/>
            <person name="Myers E.W."/>
            <person name="Venter J.C."/>
        </authorList>
    </citation>
    <scope>NUCLEOTIDE SEQUENCE [LARGE SCALE GENOMIC DNA]</scope>
</reference>
<reference key="6">
    <citation type="journal article" date="2004" name="Genome Res.">
        <title>The status, quality, and expansion of the NIH full-length cDNA project: the Mammalian Gene Collection (MGC).</title>
        <authorList>
            <consortium name="The MGC Project Team"/>
        </authorList>
    </citation>
    <scope>NUCLEOTIDE SEQUENCE [LARGE SCALE MRNA]</scope>
    <source>
        <tissue>Lung</tissue>
    </source>
</reference>
<reference key="7">
    <citation type="journal article" date="1994" name="Proc. Natl. Acad. Sci. U.S.A.">
        <title>Rab geranylgeranyl transferase catalyzes the geranylgeranylation of adjacent cysteines in the small GTPases Rab1A, Rab3A, and Rab5A.</title>
        <authorList>
            <person name="Farnsworth C.C."/>
            <person name="Seabra M.C."/>
            <person name="Ericsson L.H."/>
            <person name="Gelb M.H."/>
            <person name="Glomset J.A."/>
        </authorList>
    </citation>
    <scope>FUNCTION</scope>
    <scope>SUBUNIT</scope>
    <scope>CATALYTIC ACTIVITY</scope>
</reference>
<reference key="8">
    <citation type="journal article" date="2008" name="Biochem. J.">
        <title>Rab geranylgeranylation occurs preferentially via the pre-formed REP-RGGT complex and is regulated by geranylgeranyl pyrophosphate.</title>
        <authorList>
            <person name="Baron R.A."/>
            <person name="Seabra M.C."/>
        </authorList>
    </citation>
    <scope>SUBUNIT</scope>
</reference>
<reference key="9">
    <citation type="journal article" date="2011" name="BMC Syst. Biol.">
        <title>Initial characterization of the human central proteome.</title>
        <authorList>
            <person name="Burkard T.R."/>
            <person name="Planyavsky M."/>
            <person name="Kaupe I."/>
            <person name="Breitwieser F.P."/>
            <person name="Buerckstuemmer T."/>
            <person name="Bennett K.L."/>
            <person name="Superti-Furga G."/>
            <person name="Colinge J."/>
        </authorList>
    </citation>
    <scope>IDENTIFICATION BY MASS SPECTROMETRY [LARGE SCALE ANALYSIS]</scope>
</reference>
<reference key="10">
    <citation type="journal article" date="2016" name="Elife">
        <title>Phosphoproteomics reveals that Parkinson's disease kinase LRRK2 regulates a subset of Rab GTPases.</title>
        <authorList>
            <person name="Steger M."/>
            <person name="Tonelli F."/>
            <person name="Ito G."/>
            <person name="Davies P."/>
            <person name="Trost M."/>
            <person name="Vetter M."/>
            <person name="Wachter S."/>
            <person name="Lorentzen E."/>
            <person name="Duddy G."/>
            <person name="Wilson S."/>
            <person name="Baptista M.A."/>
            <person name="Fiske B.K."/>
            <person name="Fell M.J."/>
            <person name="Morrow J.A."/>
            <person name="Reith A.D."/>
            <person name="Alessi D.R."/>
            <person name="Mann M."/>
        </authorList>
    </citation>
    <scope>IDENTIFICATION BY MASS SPECTROMETRY</scope>
    <scope>INTERACTION WITH RAB8A</scope>
</reference>
<feature type="chain" id="PRO_0000119757" description="Geranylgeranyl transferase type-2 subunit alpha">
    <location>
        <begin position="1"/>
        <end position="567"/>
    </location>
</feature>
<feature type="repeat" description="PFTA 1">
    <location>
        <begin position="44"/>
        <end position="78"/>
    </location>
</feature>
<feature type="repeat" description="PFTA 2">
    <location>
        <begin position="88"/>
        <end position="122"/>
    </location>
</feature>
<feature type="repeat" description="PFTA 3">
    <location>
        <begin position="124"/>
        <end position="158"/>
    </location>
</feature>
<feature type="repeat" description="PFTA 4">
    <location>
        <begin position="159"/>
        <end position="193"/>
    </location>
</feature>
<feature type="repeat" description="PFTA 5">
    <location>
        <begin position="207"/>
        <end position="241"/>
    </location>
</feature>
<feature type="repeat" description="PFTA 6">
    <location>
        <begin position="363"/>
        <end position="397"/>
    </location>
</feature>
<feature type="repeat" description="LRR 1">
    <location>
        <begin position="442"/>
        <end position="463"/>
    </location>
</feature>
<feature type="repeat" description="LRR 2">
    <location>
        <begin position="464"/>
        <end position="486"/>
    </location>
</feature>
<feature type="repeat" description="LRR 3">
    <location>
        <begin position="487"/>
        <end position="508"/>
    </location>
</feature>
<feature type="repeat" description="LRR 4">
    <location>
        <begin position="509"/>
        <end position="530"/>
    </location>
</feature>
<feature type="repeat" description="LRR 5">
    <location>
        <begin position="534"/>
        <end position="555"/>
    </location>
</feature>
<feature type="modified residue" description="Phosphoserine" evidence="1">
    <location>
        <position position="98"/>
    </location>
</feature>
<feature type="sequence variant" id="VAR_020406" description="In dbSNP:rs729421." evidence="2">
    <original>T</original>
    <variation>A</variation>
    <location>
        <position position="420"/>
    </location>
</feature>
<keyword id="KW-0433">Leucine-rich repeat</keyword>
<keyword id="KW-0597">Phosphoprotein</keyword>
<keyword id="KW-0637">Prenyltransferase</keyword>
<keyword id="KW-1267">Proteomics identification</keyword>
<keyword id="KW-1185">Reference proteome</keyword>
<keyword id="KW-0677">Repeat</keyword>
<keyword id="KW-0808">Transferase</keyword>
<sequence length="567" mass="65072">MHGRLKVKTSEEQAEAKRLEREQKLKLYQSATQAVFQKRQAGELDESVLELTSQILGANPDFATLWNCRREVLQQLETQKSPEELAALVKAELGFLESCLRVNPKSYGTWHHRCWLLGRLPEPNWTRELELCARFLEVDERNFHCWDYRRFVATQAAVPPAEELAFTDSLITRNFSNYSSWHYRSCLLPQLHPQPDSGPQGRLPEDVLLKELELVQNAFFTDPNDQSAWFYHRWLLGRADPQDALRCLHVSRDEACLTVSFSRPLLVGSRMEILLLMVDDSPLIVEWRTPDGRNRPSHVWLCDLPAASLNDQLPQHTFRVIWTAGDVQKECVLLKGRQEGWCRDSTTDEQLFRCELSVEKSTVLQSELESCKELQELEPENKWCLLTIILLMRALDPLLYEKETLQYFQTLKAVDPMRATYLDDLRSKFLLENSVLKMEYAEVRVLHLAHKDLTVLCHLEQLLLVTHLDLSHNRLRTLPPALAALRCLEVLQASDNAIESLDGVTNLPRLQELLLCNNRLQQPAVLQPLASCPRLVLLNLQGNPLCQAVGILEQLAELLPSVSSVLT</sequence>
<organism>
    <name type="scientific">Homo sapiens</name>
    <name type="common">Human</name>
    <dbReference type="NCBI Taxonomy" id="9606"/>
    <lineage>
        <taxon>Eukaryota</taxon>
        <taxon>Metazoa</taxon>
        <taxon>Chordata</taxon>
        <taxon>Craniata</taxon>
        <taxon>Vertebrata</taxon>
        <taxon>Euteleostomi</taxon>
        <taxon>Mammalia</taxon>
        <taxon>Eutheria</taxon>
        <taxon>Euarchontoglires</taxon>
        <taxon>Primates</taxon>
        <taxon>Haplorrhini</taxon>
        <taxon>Catarrhini</taxon>
        <taxon>Hominidae</taxon>
        <taxon>Homo</taxon>
    </lineage>
</organism>
<protein>
    <recommendedName>
        <fullName>Geranylgeranyl transferase type-2 subunit alpha</fullName>
        <ecNumber>2.5.1.60</ecNumber>
    </recommendedName>
    <alternativeName>
        <fullName>Geranylgeranyl transferase type II subunit alpha</fullName>
    </alternativeName>
    <alternativeName>
        <fullName>Rab geranyl-geranyltransferase subunit alpha</fullName>
        <shortName>Rab GG transferase alpha</shortName>
        <shortName>Rab GGTase alpha</shortName>
    </alternativeName>
    <alternativeName>
        <fullName>Rab geranylgeranyltransferase subunit alpha</fullName>
    </alternativeName>
</protein>
<comment type="function">
    <text evidence="5">Catalyzes the transfer of a geranylgeranyl moiety from geranylgeranyl diphosphate to both cysteines of Rab proteins with the C-terminal sequence -XXCC, -XCXC and -CCXX, such as RAB1A, RAB3A, RAB5A and RAB7A.</text>
</comment>
<comment type="catalytic activity">
    <reaction evidence="5">
        <text>geranylgeranyl diphosphate + L-cysteinyl-[protein] = S-geranylgeranyl-L-cysteinyl-[protein] + diphosphate</text>
        <dbReference type="Rhea" id="RHEA:21240"/>
        <dbReference type="Rhea" id="RHEA-COMP:10131"/>
        <dbReference type="Rhea" id="RHEA-COMP:11537"/>
        <dbReference type="ChEBI" id="CHEBI:29950"/>
        <dbReference type="ChEBI" id="CHEBI:33019"/>
        <dbReference type="ChEBI" id="CHEBI:57533"/>
        <dbReference type="ChEBI" id="CHEBI:86021"/>
        <dbReference type="EC" id="2.5.1.60"/>
    </reaction>
</comment>
<comment type="activity regulation">
    <text>The enzymatic reaction requires the aid of a Rab escort protein (also called component A), such as CHM.</text>
</comment>
<comment type="subunit">
    <text evidence="3 4 5">Heterotrimer composed of RABGGTA, RABGGTB and CHM; within this trimer, RABGGTA and RABGGTB form the catalytic component B, while CHM (component A) mediates peptide substrate binding (PubMed:7991565). The Rab GGTase dimer (RGGT) interacts with CHM (component A) prior to Rab protein binding; the association is stabilized by geranylgeranyl pyrophosphate (GGpp). The CHM:RGGT:Rab complex is destabilized by GGpp (PubMed:18532927). Interacts with non-phosphorylated form of RAB8A; phosphorylation of RAB8A at 'Thr-72' disrupts this interaction (PubMed:26824392).</text>
</comment>
<comment type="interaction">
    <interactant intactId="EBI-9104196">
        <id>Q92696</id>
    </interactant>
    <interactant intactId="EBI-2515129">
        <id>P24386</id>
        <label>CHM</label>
    </interactant>
    <organismsDiffer>false</organismsDiffer>
    <experiments>6</experiments>
</comment>
<comment type="interaction">
    <interactant intactId="EBI-9104196">
        <id>Q92696</id>
    </interactant>
    <interactant intactId="EBI-536715">
        <id>P53611</id>
        <label>RABGGTB</label>
    </interactant>
    <organismsDiffer>false</organismsDiffer>
    <experiments>8</experiments>
</comment>
<comment type="similarity">
    <text evidence="6">Belongs to the protein prenyltransferase subunit alpha family.</text>
</comment>
<dbReference type="EC" id="2.5.1.60"/>
<dbReference type="EMBL" id="Y08200">
    <property type="protein sequence ID" value="CAA69382.1"/>
    <property type="molecule type" value="mRNA"/>
</dbReference>
<dbReference type="EMBL" id="AK291347">
    <property type="protein sequence ID" value="BAF84036.1"/>
    <property type="molecule type" value="mRNA"/>
</dbReference>
<dbReference type="EMBL" id="AK292613">
    <property type="protein sequence ID" value="BAF85302.1"/>
    <property type="molecule type" value="mRNA"/>
</dbReference>
<dbReference type="EMBL" id="CH471078">
    <property type="protein sequence ID" value="EAW66044.1"/>
    <property type="molecule type" value="Genomic_DNA"/>
</dbReference>
<dbReference type="EMBL" id="CH471078">
    <property type="protein sequence ID" value="EAW66045.1"/>
    <property type="molecule type" value="Genomic_DNA"/>
</dbReference>
<dbReference type="EMBL" id="BC003093">
    <property type="protein sequence ID" value="AAH03093.1"/>
    <property type="molecule type" value="mRNA"/>
</dbReference>
<dbReference type="CCDS" id="CCDS45088.1"/>
<dbReference type="PIR" id="JC5538">
    <property type="entry name" value="JC5538"/>
</dbReference>
<dbReference type="RefSeq" id="NP_004572.3">
    <property type="nucleotide sequence ID" value="NM_004581.5"/>
</dbReference>
<dbReference type="RefSeq" id="NP_878256.1">
    <property type="nucleotide sequence ID" value="NM_182836.3"/>
</dbReference>
<dbReference type="SMR" id="Q92696"/>
<dbReference type="BioGRID" id="111813">
    <property type="interactions" value="97"/>
</dbReference>
<dbReference type="ComplexPortal" id="CPX-2919">
    <property type="entry name" value="Protein geranylgeranyltransferase type II complex"/>
</dbReference>
<dbReference type="CORUM" id="Q92696"/>
<dbReference type="FunCoup" id="Q92696">
    <property type="interactions" value="1611"/>
</dbReference>
<dbReference type="IntAct" id="Q92696">
    <property type="interactions" value="58"/>
</dbReference>
<dbReference type="MINT" id="Q92696"/>
<dbReference type="STRING" id="9606.ENSP00000382341"/>
<dbReference type="ChEMBL" id="CHEMBL5249"/>
<dbReference type="DrugBank" id="DB07780">
    <property type="generic name" value="Farnesyl diphosphate"/>
</dbReference>
<dbReference type="DrugBank" id="DB07841">
    <property type="generic name" value="Geranylgeranyl diphosphate"/>
</dbReference>
<dbReference type="DrugBank" id="DB04464">
    <property type="generic name" value="N-Formylmethionine"/>
</dbReference>
<dbReference type="GlyGen" id="Q92696">
    <property type="glycosylation" value="1 site, 1 O-linked glycan (1 site)"/>
</dbReference>
<dbReference type="iPTMnet" id="Q92696"/>
<dbReference type="PhosphoSitePlus" id="Q92696"/>
<dbReference type="BioMuta" id="RABGGTA"/>
<dbReference type="DMDM" id="6093707"/>
<dbReference type="jPOST" id="Q92696"/>
<dbReference type="MassIVE" id="Q92696"/>
<dbReference type="PaxDb" id="9606-ENSP00000382341"/>
<dbReference type="PeptideAtlas" id="Q92696"/>
<dbReference type="ProteomicsDB" id="75413"/>
<dbReference type="Pumba" id="Q92696"/>
<dbReference type="Antibodypedia" id="22812">
    <property type="antibodies" value="82 antibodies from 23 providers"/>
</dbReference>
<dbReference type="DNASU" id="5875"/>
<dbReference type="Ensembl" id="ENST00000216840.11">
    <property type="protein sequence ID" value="ENSP00000216840.6"/>
    <property type="gene ID" value="ENSG00000100949.15"/>
</dbReference>
<dbReference type="Ensembl" id="ENST00000399409.7">
    <property type="protein sequence ID" value="ENSP00000382341.3"/>
    <property type="gene ID" value="ENSG00000100949.15"/>
</dbReference>
<dbReference type="Ensembl" id="ENST00000644383.1">
    <property type="protein sequence ID" value="ENSP00000494636.1"/>
    <property type="gene ID" value="ENSG00000285193.1"/>
</dbReference>
<dbReference type="Ensembl" id="ENST00000646658.1">
    <property type="protein sequence ID" value="ENSP00000496595.1"/>
    <property type="gene ID" value="ENSG00000285193.1"/>
</dbReference>
<dbReference type="GeneID" id="5875"/>
<dbReference type="KEGG" id="hsa:5875"/>
<dbReference type="MANE-Select" id="ENST00000216840.11">
    <property type="protein sequence ID" value="ENSP00000216840.6"/>
    <property type="RefSeq nucleotide sequence ID" value="NM_182836.3"/>
    <property type="RefSeq protein sequence ID" value="NP_878256.1"/>
</dbReference>
<dbReference type="UCSC" id="uc001wof.5">
    <property type="organism name" value="human"/>
</dbReference>
<dbReference type="AGR" id="HGNC:9795"/>
<dbReference type="CTD" id="5875"/>
<dbReference type="GeneCards" id="RABGGTA"/>
<dbReference type="HGNC" id="HGNC:9795">
    <property type="gene designation" value="RABGGTA"/>
</dbReference>
<dbReference type="HPA" id="ENSG00000100949">
    <property type="expression patterns" value="Tissue enhanced (esophagus)"/>
</dbReference>
<dbReference type="MIM" id="601905">
    <property type="type" value="gene"/>
</dbReference>
<dbReference type="neXtProt" id="NX_Q92696"/>
<dbReference type="OpenTargets" id="ENSG00000100949"/>
<dbReference type="PharmGKB" id="PA34156"/>
<dbReference type="VEuPathDB" id="HostDB:ENSG00000100949"/>
<dbReference type="eggNOG" id="KOG0529">
    <property type="taxonomic scope" value="Eukaryota"/>
</dbReference>
<dbReference type="GeneTree" id="ENSGT00550000075121"/>
<dbReference type="InParanoid" id="Q92696"/>
<dbReference type="OMA" id="CAWHHRC"/>
<dbReference type="OrthoDB" id="1658at2759"/>
<dbReference type="PAN-GO" id="Q92696">
    <property type="GO annotations" value="4 GO annotations based on evolutionary models"/>
</dbReference>
<dbReference type="PhylomeDB" id="Q92696"/>
<dbReference type="TreeFam" id="TF315057"/>
<dbReference type="PathwayCommons" id="Q92696"/>
<dbReference type="Reactome" id="R-HSA-6803205">
    <property type="pathway name" value="TP53 regulates transcription of several additional cell death genes whose specific roles in p53-dependent apoptosis remain uncertain"/>
</dbReference>
<dbReference type="Reactome" id="R-HSA-8873719">
    <property type="pathway name" value="RAB geranylgeranylation"/>
</dbReference>
<dbReference type="SignaLink" id="Q92696"/>
<dbReference type="SIGNOR" id="Q92696"/>
<dbReference type="BioGRID-ORCS" id="5875">
    <property type="hits" value="702 hits in 1164 CRISPR screens"/>
</dbReference>
<dbReference type="ChiTaRS" id="RABGGTA">
    <property type="organism name" value="human"/>
</dbReference>
<dbReference type="GenomeRNAi" id="5875"/>
<dbReference type="Pharos" id="Q92696">
    <property type="development level" value="Tdark"/>
</dbReference>
<dbReference type="PRO" id="PR:Q92696"/>
<dbReference type="Proteomes" id="UP000005640">
    <property type="component" value="Chromosome 14"/>
</dbReference>
<dbReference type="RNAct" id="Q92696">
    <property type="molecule type" value="protein"/>
</dbReference>
<dbReference type="Bgee" id="ENSG00000100949">
    <property type="expression patterns" value="Expressed in lower esophagus mucosa and 97 other cell types or tissues"/>
</dbReference>
<dbReference type="ExpressionAtlas" id="Q92696">
    <property type="expression patterns" value="baseline and differential"/>
</dbReference>
<dbReference type="GO" id="GO:0005737">
    <property type="term" value="C:cytoplasm"/>
    <property type="evidence" value="ECO:0000318"/>
    <property type="project" value="GO_Central"/>
</dbReference>
<dbReference type="GO" id="GO:0005829">
    <property type="term" value="C:cytosol"/>
    <property type="evidence" value="ECO:0000304"/>
    <property type="project" value="Reactome"/>
</dbReference>
<dbReference type="GO" id="GO:0005886">
    <property type="term" value="C:plasma membrane"/>
    <property type="evidence" value="ECO:0000304"/>
    <property type="project" value="Reactome"/>
</dbReference>
<dbReference type="GO" id="GO:0005968">
    <property type="term" value="C:Rab-protein geranylgeranyltransferase complex"/>
    <property type="evidence" value="ECO:0000250"/>
    <property type="project" value="UniProtKB"/>
</dbReference>
<dbReference type="GO" id="GO:0004663">
    <property type="term" value="F:Rab geranylgeranyltransferase activity"/>
    <property type="evidence" value="ECO:0000250"/>
    <property type="project" value="UniProtKB"/>
</dbReference>
<dbReference type="GO" id="GO:0031267">
    <property type="term" value="F:small GTPase binding"/>
    <property type="evidence" value="ECO:0000250"/>
    <property type="project" value="UniProtKB"/>
</dbReference>
<dbReference type="GO" id="GO:0008270">
    <property type="term" value="F:zinc ion binding"/>
    <property type="evidence" value="ECO:0007669"/>
    <property type="project" value="InterPro"/>
</dbReference>
<dbReference type="GO" id="GO:0006888">
    <property type="term" value="P:endoplasmic reticulum to Golgi vesicle-mediated transport"/>
    <property type="evidence" value="ECO:0000318"/>
    <property type="project" value="GO_Central"/>
</dbReference>
<dbReference type="GO" id="GO:0018344">
    <property type="term" value="P:protein geranylgeranylation"/>
    <property type="evidence" value="ECO:0000250"/>
    <property type="project" value="UniProtKB"/>
</dbReference>
<dbReference type="GO" id="GO:0036211">
    <property type="term" value="P:protein modification process"/>
    <property type="evidence" value="ECO:0000304"/>
    <property type="project" value="ProtInc"/>
</dbReference>
<dbReference type="GO" id="GO:0007601">
    <property type="term" value="P:visual perception"/>
    <property type="evidence" value="ECO:0000304"/>
    <property type="project" value="ProtInc"/>
</dbReference>
<dbReference type="FunFam" id="1.25.40.120:FF:000035">
    <property type="entry name" value="Geranylgeranyl transferase type-2 subunit alpha"/>
    <property type="match status" value="2"/>
</dbReference>
<dbReference type="FunFam" id="2.60.40.1130:FF:000001">
    <property type="entry name" value="Geranylgeranyl transferase type-2 subunit alpha"/>
    <property type="match status" value="1"/>
</dbReference>
<dbReference type="FunFam" id="3.80.10.10:FF:000138">
    <property type="entry name" value="geranylgeranyl transferase type-2 subunit alpha"/>
    <property type="match status" value="1"/>
</dbReference>
<dbReference type="Gene3D" id="1.25.40.120">
    <property type="entry name" value="Protein prenylyltransferase"/>
    <property type="match status" value="1"/>
</dbReference>
<dbReference type="Gene3D" id="2.60.40.1130">
    <property type="entry name" value="Rab geranylgeranyltransferase alpha-subunit, insert domain"/>
    <property type="match status" value="1"/>
</dbReference>
<dbReference type="Gene3D" id="3.80.10.10">
    <property type="entry name" value="Ribonuclease Inhibitor"/>
    <property type="match status" value="1"/>
</dbReference>
<dbReference type="InterPro" id="IPR001611">
    <property type="entry name" value="Leu-rich_rpt"/>
</dbReference>
<dbReference type="InterPro" id="IPR032675">
    <property type="entry name" value="LRR_dom_sf"/>
</dbReference>
<dbReference type="InterPro" id="IPR002088">
    <property type="entry name" value="Prenyl_trans_a"/>
</dbReference>
<dbReference type="InterPro" id="IPR036254">
    <property type="entry name" value="RabGGT_asu_insert-dom_sf"/>
</dbReference>
<dbReference type="InterPro" id="IPR009087">
    <property type="entry name" value="RabGGT_asu_insert-domain"/>
</dbReference>
<dbReference type="PANTHER" id="PTHR11129:SF2">
    <property type="entry name" value="GERANYLGERANYL TRANSFERASE TYPE-2 SUBUNIT ALPHA"/>
    <property type="match status" value="1"/>
</dbReference>
<dbReference type="PANTHER" id="PTHR11129">
    <property type="entry name" value="PROTEIN FARNESYLTRANSFERASE ALPHA SUBUNIT/RAB GERANYLGERANYL TRANSFERASE ALPHA SUBUNIT"/>
    <property type="match status" value="1"/>
</dbReference>
<dbReference type="Pfam" id="PF00560">
    <property type="entry name" value="LRR_1"/>
    <property type="match status" value="1"/>
</dbReference>
<dbReference type="Pfam" id="PF01239">
    <property type="entry name" value="PPTA"/>
    <property type="match status" value="5"/>
</dbReference>
<dbReference type="Pfam" id="PF07711">
    <property type="entry name" value="RabGGT_insert"/>
    <property type="match status" value="1"/>
</dbReference>
<dbReference type="SUPFAM" id="SSF52058">
    <property type="entry name" value="L domain-like"/>
    <property type="match status" value="1"/>
</dbReference>
<dbReference type="SUPFAM" id="SSF48439">
    <property type="entry name" value="Protein prenylyltransferase"/>
    <property type="match status" value="1"/>
</dbReference>
<dbReference type="SUPFAM" id="SSF49594">
    <property type="entry name" value="Rab geranylgeranyltransferase alpha-subunit, insert domain"/>
    <property type="match status" value="1"/>
</dbReference>
<dbReference type="PROSITE" id="PS51450">
    <property type="entry name" value="LRR"/>
    <property type="match status" value="5"/>
</dbReference>
<dbReference type="PROSITE" id="PS51147">
    <property type="entry name" value="PFTA"/>
    <property type="match status" value="6"/>
</dbReference>
<proteinExistence type="evidence at protein level"/>
<name>PGTA_HUMAN</name>
<accession>Q92696</accession>
<accession>A8K5N2</accession>
<accession>D3DS69</accession>